<protein>
    <recommendedName>
        <fullName evidence="1">Ribosome-recycling factor</fullName>
        <shortName evidence="1">RRF</shortName>
    </recommendedName>
    <alternativeName>
        <fullName evidence="1">Ribosome-releasing factor</fullName>
    </alternativeName>
</protein>
<accession>B8FRG2</accession>
<proteinExistence type="inferred from homology"/>
<sequence length="185" mass="21148">MINDVLKEAEDRMVKAVEALKREYATIRAGRANPNMLDKITVEYYGTQTPVNQLANISVPEPRMLTIQPWDKSSLPMIEKAILKSDLGLNPSSDGTVIRLLIPQLTAERRTEIVKTVKKKAEDSRVAVRNIRRDSNDELKKLEKDHTASEDEVKRAQDDVQKMTDKFVKEIDRIMGTKEKEIMEV</sequence>
<organism>
    <name type="scientific">Desulfitobacterium hafniense (strain DSM 10664 / DCB-2)</name>
    <dbReference type="NCBI Taxonomy" id="272564"/>
    <lineage>
        <taxon>Bacteria</taxon>
        <taxon>Bacillati</taxon>
        <taxon>Bacillota</taxon>
        <taxon>Clostridia</taxon>
        <taxon>Eubacteriales</taxon>
        <taxon>Desulfitobacteriaceae</taxon>
        <taxon>Desulfitobacterium</taxon>
    </lineage>
</organism>
<reference key="1">
    <citation type="journal article" date="2012" name="BMC Microbiol.">
        <title>Genome sequence of Desulfitobacterium hafniense DCB-2, a Gram-positive anaerobe capable of dehalogenation and metal reduction.</title>
        <authorList>
            <person name="Kim S.H."/>
            <person name="Harzman C."/>
            <person name="Davis J.K."/>
            <person name="Hutcheson R."/>
            <person name="Broderick J.B."/>
            <person name="Marsh T.L."/>
            <person name="Tiedje J.M."/>
        </authorList>
    </citation>
    <scope>NUCLEOTIDE SEQUENCE [LARGE SCALE GENOMIC DNA]</scope>
    <source>
        <strain>DSM 10664 / DCB-2</strain>
    </source>
</reference>
<gene>
    <name evidence="1" type="primary">frr</name>
    <name type="ordered locus">Dhaf_3706</name>
</gene>
<feature type="chain" id="PRO_1000194920" description="Ribosome-recycling factor">
    <location>
        <begin position="1"/>
        <end position="185"/>
    </location>
</feature>
<feature type="region of interest" description="Disordered" evidence="2">
    <location>
        <begin position="138"/>
        <end position="157"/>
    </location>
</feature>
<evidence type="ECO:0000255" key="1">
    <source>
        <dbReference type="HAMAP-Rule" id="MF_00040"/>
    </source>
</evidence>
<evidence type="ECO:0000256" key="2">
    <source>
        <dbReference type="SAM" id="MobiDB-lite"/>
    </source>
</evidence>
<keyword id="KW-0963">Cytoplasm</keyword>
<keyword id="KW-0648">Protein biosynthesis</keyword>
<name>RRF_DESHD</name>
<dbReference type="EMBL" id="CP001336">
    <property type="protein sequence ID" value="ACL21722.1"/>
    <property type="molecule type" value="Genomic_DNA"/>
</dbReference>
<dbReference type="RefSeq" id="WP_015944743.1">
    <property type="nucleotide sequence ID" value="NC_011830.1"/>
</dbReference>
<dbReference type="SMR" id="B8FRG2"/>
<dbReference type="KEGG" id="dhd:Dhaf_3706"/>
<dbReference type="HOGENOM" id="CLU_073981_2_0_9"/>
<dbReference type="Proteomes" id="UP000007726">
    <property type="component" value="Chromosome"/>
</dbReference>
<dbReference type="GO" id="GO:0005737">
    <property type="term" value="C:cytoplasm"/>
    <property type="evidence" value="ECO:0007669"/>
    <property type="project" value="UniProtKB-SubCell"/>
</dbReference>
<dbReference type="GO" id="GO:0043023">
    <property type="term" value="F:ribosomal large subunit binding"/>
    <property type="evidence" value="ECO:0007669"/>
    <property type="project" value="TreeGrafter"/>
</dbReference>
<dbReference type="GO" id="GO:0006415">
    <property type="term" value="P:translational termination"/>
    <property type="evidence" value="ECO:0007669"/>
    <property type="project" value="UniProtKB-UniRule"/>
</dbReference>
<dbReference type="CDD" id="cd00520">
    <property type="entry name" value="RRF"/>
    <property type="match status" value="1"/>
</dbReference>
<dbReference type="FunFam" id="1.10.132.20:FF:000001">
    <property type="entry name" value="Ribosome-recycling factor"/>
    <property type="match status" value="1"/>
</dbReference>
<dbReference type="FunFam" id="3.30.1360.40:FF:000001">
    <property type="entry name" value="Ribosome-recycling factor"/>
    <property type="match status" value="1"/>
</dbReference>
<dbReference type="Gene3D" id="3.30.1360.40">
    <property type="match status" value="1"/>
</dbReference>
<dbReference type="Gene3D" id="1.10.132.20">
    <property type="entry name" value="Ribosome-recycling factor"/>
    <property type="match status" value="1"/>
</dbReference>
<dbReference type="HAMAP" id="MF_00040">
    <property type="entry name" value="RRF"/>
    <property type="match status" value="1"/>
</dbReference>
<dbReference type="InterPro" id="IPR002661">
    <property type="entry name" value="Ribosome_recyc_fac"/>
</dbReference>
<dbReference type="InterPro" id="IPR023584">
    <property type="entry name" value="Ribosome_recyc_fac_dom"/>
</dbReference>
<dbReference type="InterPro" id="IPR036191">
    <property type="entry name" value="RRF_sf"/>
</dbReference>
<dbReference type="NCBIfam" id="TIGR00496">
    <property type="entry name" value="frr"/>
    <property type="match status" value="1"/>
</dbReference>
<dbReference type="PANTHER" id="PTHR20982:SF3">
    <property type="entry name" value="MITOCHONDRIAL RIBOSOME RECYCLING FACTOR PSEUDO 1"/>
    <property type="match status" value="1"/>
</dbReference>
<dbReference type="PANTHER" id="PTHR20982">
    <property type="entry name" value="RIBOSOME RECYCLING FACTOR"/>
    <property type="match status" value="1"/>
</dbReference>
<dbReference type="Pfam" id="PF01765">
    <property type="entry name" value="RRF"/>
    <property type="match status" value="1"/>
</dbReference>
<dbReference type="SUPFAM" id="SSF55194">
    <property type="entry name" value="Ribosome recycling factor, RRF"/>
    <property type="match status" value="1"/>
</dbReference>
<comment type="function">
    <text evidence="1">Responsible for the release of ribosomes from messenger RNA at the termination of protein biosynthesis. May increase the efficiency of translation by recycling ribosomes from one round of translation to another.</text>
</comment>
<comment type="subcellular location">
    <subcellularLocation>
        <location evidence="1">Cytoplasm</location>
    </subcellularLocation>
</comment>
<comment type="similarity">
    <text evidence="1">Belongs to the RRF family.</text>
</comment>